<feature type="chain" id="PRO_0000156106" description="Ribose 1,5-bisphosphate isomerase">
    <location>
        <begin position="1"/>
        <end position="324"/>
    </location>
</feature>
<feature type="active site" description="Proton acceptor" evidence="1">
    <location>
        <position position="135"/>
    </location>
</feature>
<feature type="active site" description="Proton donor" evidence="1">
    <location>
        <position position="204"/>
    </location>
</feature>
<feature type="binding site" evidence="1">
    <location>
        <begin position="22"/>
        <end position="25"/>
    </location>
    <ligand>
        <name>substrate</name>
    </ligand>
</feature>
<feature type="binding site" evidence="1">
    <location>
        <position position="65"/>
    </location>
    <ligand>
        <name>substrate</name>
    </ligand>
</feature>
<feature type="binding site" evidence="1">
    <location>
        <begin position="137"/>
        <end position="139"/>
    </location>
    <ligand>
        <name>substrate</name>
    </ligand>
</feature>
<feature type="binding site" evidence="1">
    <location>
        <begin position="214"/>
        <end position="215"/>
    </location>
    <ligand>
        <name>substrate</name>
    </ligand>
</feature>
<feature type="binding site" evidence="1">
    <location>
        <position position="240"/>
    </location>
    <ligand>
        <name>substrate</name>
    </ligand>
</feature>
<feature type="helix" evidence="3">
    <location>
        <begin position="7"/>
        <end position="17"/>
    </location>
</feature>
<feature type="helix" evidence="3">
    <location>
        <begin position="24"/>
        <end position="41"/>
    </location>
</feature>
<feature type="helix" evidence="3">
    <location>
        <begin position="47"/>
        <end position="62"/>
    </location>
</feature>
<feature type="helix" evidence="3">
    <location>
        <begin position="70"/>
        <end position="87"/>
    </location>
</feature>
<feature type="helix" evidence="3">
    <location>
        <begin position="92"/>
        <end position="122"/>
    </location>
</feature>
<feature type="strand" evidence="3">
    <location>
        <begin position="130"/>
        <end position="133"/>
    </location>
</feature>
<feature type="helix" evidence="3">
    <location>
        <begin position="138"/>
        <end position="149"/>
    </location>
</feature>
<feature type="strand" evidence="3">
    <location>
        <begin position="155"/>
        <end position="159"/>
    </location>
</feature>
<feature type="turn" evidence="3">
    <location>
        <begin position="162"/>
        <end position="165"/>
    </location>
</feature>
<feature type="helix" evidence="3">
    <location>
        <begin position="166"/>
        <end position="176"/>
    </location>
</feature>
<feature type="strand" evidence="3">
    <location>
        <begin position="181"/>
        <end position="184"/>
    </location>
</feature>
<feature type="helix" evidence="3">
    <location>
        <begin position="186"/>
        <end position="188"/>
    </location>
</feature>
<feature type="turn" evidence="3">
    <location>
        <begin position="189"/>
        <end position="195"/>
    </location>
</feature>
<feature type="strand" evidence="3">
    <location>
        <begin position="197"/>
        <end position="201"/>
    </location>
</feature>
<feature type="strand" evidence="3">
    <location>
        <begin position="204"/>
        <end position="206"/>
    </location>
</feature>
<feature type="strand" evidence="3">
    <location>
        <begin position="212"/>
        <end position="215"/>
    </location>
</feature>
<feature type="helix" evidence="3">
    <location>
        <begin position="218"/>
        <end position="227"/>
    </location>
</feature>
<feature type="strand" evidence="3">
    <location>
        <begin position="231"/>
        <end position="235"/>
    </location>
</feature>
<feature type="helix" evidence="3">
    <location>
        <begin position="238"/>
        <end position="240"/>
    </location>
</feature>
<feature type="helix" evidence="3">
    <location>
        <begin position="243"/>
        <end position="247"/>
    </location>
</feature>
<feature type="helix" evidence="3">
    <location>
        <begin position="258"/>
        <end position="260"/>
    </location>
</feature>
<feature type="helix" evidence="3">
    <location>
        <begin position="264"/>
        <end position="267"/>
    </location>
</feature>
<feature type="strand" evidence="3">
    <location>
        <begin position="281"/>
        <end position="284"/>
    </location>
</feature>
<feature type="helix" evidence="3">
    <location>
        <begin position="286"/>
        <end position="288"/>
    </location>
</feature>
<feature type="strand" evidence="3">
    <location>
        <begin position="291"/>
        <end position="294"/>
    </location>
</feature>
<feature type="strand" evidence="3">
    <location>
        <begin position="297"/>
        <end position="299"/>
    </location>
</feature>
<feature type="helix" evidence="3">
    <location>
        <begin position="301"/>
        <end position="303"/>
    </location>
</feature>
<feature type="helix" evidence="3">
    <location>
        <begin position="304"/>
        <end position="312"/>
    </location>
</feature>
<feature type="helix" evidence="3">
    <location>
        <begin position="313"/>
        <end position="315"/>
    </location>
</feature>
<accession>O57947</accession>
<dbReference type="EC" id="5.3.1.29" evidence="1"/>
<dbReference type="EMBL" id="BA000001">
    <property type="protein sequence ID" value="BAA29277.1"/>
    <property type="molecule type" value="Genomic_DNA"/>
</dbReference>
<dbReference type="PIR" id="F71243">
    <property type="entry name" value="F71243"/>
</dbReference>
<dbReference type="PDB" id="5YFJ">
    <property type="method" value="X-ray"/>
    <property type="resolution" value="2.20 A"/>
    <property type="chains" value="A/B/C=1-324"/>
</dbReference>
<dbReference type="PDB" id="5YFS">
    <property type="method" value="X-ray"/>
    <property type="resolution" value="2.30 A"/>
    <property type="chains" value="A/B/C=1-324"/>
</dbReference>
<dbReference type="PDB" id="5YFT">
    <property type="method" value="X-ray"/>
    <property type="resolution" value="2.21 A"/>
    <property type="chains" value="A/B/C=1-324"/>
</dbReference>
<dbReference type="PDB" id="5YFU">
    <property type="method" value="X-ray"/>
    <property type="resolution" value="2.35 A"/>
    <property type="chains" value="A/B/C=1-324"/>
</dbReference>
<dbReference type="PDB" id="5YFV">
    <property type="method" value="X-ray"/>
    <property type="resolution" value="2.75 A"/>
    <property type="chains" value="A/B/C=1-324"/>
</dbReference>
<dbReference type="PDB" id="5YFW">
    <property type="method" value="X-ray"/>
    <property type="resolution" value="2.35 A"/>
    <property type="chains" value="A/B/C=1-324"/>
</dbReference>
<dbReference type="PDB" id="5YFX">
    <property type="method" value="X-ray"/>
    <property type="resolution" value="2.70 A"/>
    <property type="chains" value="A=1-324"/>
</dbReference>
<dbReference type="PDB" id="5YG5">
    <property type="method" value="X-ray"/>
    <property type="resolution" value="2.75 A"/>
    <property type="chains" value="A/B/C=1-324"/>
</dbReference>
<dbReference type="PDB" id="5YG6">
    <property type="method" value="X-ray"/>
    <property type="resolution" value="2.35 A"/>
    <property type="chains" value="A/B/C=1-324"/>
</dbReference>
<dbReference type="PDB" id="5YG7">
    <property type="method" value="X-ray"/>
    <property type="resolution" value="2.50 A"/>
    <property type="chains" value="A/B/C=1-324"/>
</dbReference>
<dbReference type="PDB" id="5YG8">
    <property type="method" value="X-ray"/>
    <property type="resolution" value="2.80 A"/>
    <property type="chains" value="A/B/C=1-324"/>
</dbReference>
<dbReference type="PDB" id="5YG9">
    <property type="method" value="X-ray"/>
    <property type="resolution" value="2.80 A"/>
    <property type="chains" value="A/B/C=1-324"/>
</dbReference>
<dbReference type="PDB" id="5YGA">
    <property type="method" value="X-ray"/>
    <property type="resolution" value="2.45 A"/>
    <property type="chains" value="A/B/C=1-324"/>
</dbReference>
<dbReference type="PDBsum" id="5YFJ"/>
<dbReference type="PDBsum" id="5YFS"/>
<dbReference type="PDBsum" id="5YFT"/>
<dbReference type="PDBsum" id="5YFU"/>
<dbReference type="PDBsum" id="5YFV"/>
<dbReference type="PDBsum" id="5YFW"/>
<dbReference type="PDBsum" id="5YFX"/>
<dbReference type="PDBsum" id="5YG5"/>
<dbReference type="PDBsum" id="5YG6"/>
<dbReference type="PDBsum" id="5YG7"/>
<dbReference type="PDBsum" id="5YG8"/>
<dbReference type="PDBsum" id="5YG9"/>
<dbReference type="PDBsum" id="5YGA"/>
<dbReference type="SMR" id="O57947"/>
<dbReference type="STRING" id="70601.gene:9377118"/>
<dbReference type="EnsemblBacteria" id="BAA29277">
    <property type="protein sequence ID" value="BAA29277"/>
    <property type="gene ID" value="BAA29277"/>
</dbReference>
<dbReference type="KEGG" id="pho:PH0208"/>
<dbReference type="eggNOG" id="arCOG01124">
    <property type="taxonomic scope" value="Archaea"/>
</dbReference>
<dbReference type="BRENDA" id="5.3.1.29">
    <property type="organism ID" value="5244"/>
</dbReference>
<dbReference type="Proteomes" id="UP000000752">
    <property type="component" value="Chromosome"/>
</dbReference>
<dbReference type="GO" id="GO:0043917">
    <property type="term" value="F:ribose 1,5-bisphosphate isomerase activity"/>
    <property type="evidence" value="ECO:0007669"/>
    <property type="project" value="UniProtKB-UniRule"/>
</dbReference>
<dbReference type="GO" id="GO:0046523">
    <property type="term" value="F:S-methyl-5-thioribose-1-phosphate isomerase activity"/>
    <property type="evidence" value="ECO:0007669"/>
    <property type="project" value="TreeGrafter"/>
</dbReference>
<dbReference type="GO" id="GO:0019509">
    <property type="term" value="P:L-methionine salvage from methylthioadenosine"/>
    <property type="evidence" value="ECO:0007669"/>
    <property type="project" value="TreeGrafter"/>
</dbReference>
<dbReference type="GO" id="GO:0019323">
    <property type="term" value="P:pentose catabolic process"/>
    <property type="evidence" value="ECO:0007669"/>
    <property type="project" value="UniProtKB-UniRule"/>
</dbReference>
<dbReference type="FunFam" id="1.20.120.420:FF:000011">
    <property type="entry name" value="Ribose 1,5-bisphosphate isomerase"/>
    <property type="match status" value="1"/>
</dbReference>
<dbReference type="FunFam" id="3.40.50.10470:FF:000019">
    <property type="entry name" value="Ribose 1,5-bisphosphate isomerase"/>
    <property type="match status" value="1"/>
</dbReference>
<dbReference type="Gene3D" id="1.20.120.420">
    <property type="entry name" value="translation initiation factor eif-2b, domain 1"/>
    <property type="match status" value="1"/>
</dbReference>
<dbReference type="Gene3D" id="3.40.50.10470">
    <property type="entry name" value="Translation initiation factor eif-2b, domain 2"/>
    <property type="match status" value="1"/>
</dbReference>
<dbReference type="HAMAP" id="MF_02230">
    <property type="entry name" value="R15P_isomerase"/>
    <property type="match status" value="1"/>
</dbReference>
<dbReference type="InterPro" id="IPR000649">
    <property type="entry name" value="IF-2B-related"/>
</dbReference>
<dbReference type="InterPro" id="IPR042529">
    <property type="entry name" value="IF_2B-like_C"/>
</dbReference>
<dbReference type="InterPro" id="IPR011559">
    <property type="entry name" value="Initiation_fac_2B_a/b/d"/>
</dbReference>
<dbReference type="InterPro" id="IPR027363">
    <property type="entry name" value="M1Pi_N"/>
</dbReference>
<dbReference type="InterPro" id="IPR037171">
    <property type="entry name" value="NagB/RpiA_transferase-like"/>
</dbReference>
<dbReference type="InterPro" id="IPR005250">
    <property type="entry name" value="R15Pi"/>
</dbReference>
<dbReference type="NCBIfam" id="TIGR00524">
    <property type="entry name" value="eIF-2B_rel"/>
    <property type="match status" value="1"/>
</dbReference>
<dbReference type="NCBIfam" id="TIGR00511">
    <property type="entry name" value="ribulose_e2b2"/>
    <property type="match status" value="1"/>
</dbReference>
<dbReference type="PANTHER" id="PTHR43475">
    <property type="entry name" value="METHYLTHIORIBOSE-1-PHOSPHATE ISOMERASE"/>
    <property type="match status" value="1"/>
</dbReference>
<dbReference type="PANTHER" id="PTHR43475:SF2">
    <property type="entry name" value="RIBOSE 1,5-BISPHOSPHATE ISOMERASE"/>
    <property type="match status" value="1"/>
</dbReference>
<dbReference type="Pfam" id="PF01008">
    <property type="entry name" value="IF-2B"/>
    <property type="match status" value="1"/>
</dbReference>
<dbReference type="SUPFAM" id="SSF100950">
    <property type="entry name" value="NagB/RpiA/CoA transferase-like"/>
    <property type="match status" value="1"/>
</dbReference>
<evidence type="ECO:0000255" key="1">
    <source>
        <dbReference type="HAMAP-Rule" id="MF_02230"/>
    </source>
</evidence>
<evidence type="ECO:0000305" key="2"/>
<evidence type="ECO:0007829" key="3">
    <source>
        <dbReference type="PDB" id="5YFJ"/>
    </source>
</evidence>
<sequence>MGAMIVKEVYETAEKIKSMEIRGAGRIARAAAQALMIQAEKSKAKEPEELWNELKVASKILYNTRPTAVSLPNALRYVMHRVKAAYLGGADLETLRFTAINSAKEFIYNSEKAIERIGEIGAKRIEDGDIIMTHCHSKAAISVMKKAFEQGKNIKVIVTETRPKWQGKITAKELASYGIPVIYIVDSAARHYMKMTDKVVMGADSITANGAVINKIGTSLIALTAKEHRVWVMIAAETYKFHPATMLGQLVEIEMRDPTEVIPEEELRTWPKNIEVWNPAFDVTPPEYIDVIITERGIIPPYAAIDILKEEFGWALKYKEPWED</sequence>
<organism>
    <name type="scientific">Pyrococcus horikoshii (strain ATCC 700860 / DSM 12428 / JCM 9974 / NBRC 100139 / OT-3)</name>
    <dbReference type="NCBI Taxonomy" id="70601"/>
    <lineage>
        <taxon>Archaea</taxon>
        <taxon>Methanobacteriati</taxon>
        <taxon>Methanobacteriota</taxon>
        <taxon>Thermococci</taxon>
        <taxon>Thermococcales</taxon>
        <taxon>Thermococcaceae</taxon>
        <taxon>Pyrococcus</taxon>
    </lineage>
</organism>
<gene>
    <name type="ordered locus">PH0208</name>
</gene>
<comment type="function">
    <text evidence="1">Catalyzes the isomerization of ribose 1,5-bisphosphate (R15P) to ribulose 1,5-bisphosphate (RuBP), the CO(2) acceptor and substrate for RubisCO. Functions in an archaeal AMP degradation pathway, together with AMP phosphorylase and RubisCO.</text>
</comment>
<comment type="catalytic activity">
    <reaction evidence="1">
        <text>alpha-D-ribose 1,5-bisphosphate = D-ribulose 1,5-bisphosphate</text>
        <dbReference type="Rhea" id="RHEA:32243"/>
        <dbReference type="ChEBI" id="CHEBI:57870"/>
        <dbReference type="ChEBI" id="CHEBI:68688"/>
        <dbReference type="EC" id="5.3.1.29"/>
    </reaction>
</comment>
<comment type="miscellaneous">
    <text evidence="1">Reaction proceeds via a cis-phosphoenolate intermediate.</text>
</comment>
<comment type="similarity">
    <text evidence="1 2">Belongs to the eIF-2B alpha/beta/delta subunits family. R15P isomerase subfamily.</text>
</comment>
<keyword id="KW-0002">3D-structure</keyword>
<keyword id="KW-0119">Carbohydrate metabolism</keyword>
<keyword id="KW-0413">Isomerase</keyword>
<protein>
    <recommendedName>
        <fullName evidence="1">Ribose 1,5-bisphosphate isomerase</fullName>
        <shortName evidence="1">R15P isomerase</shortName>
        <shortName evidence="1">R15Pi</shortName>
        <ecNumber evidence="1">5.3.1.29</ecNumber>
    </recommendedName>
    <alternativeName>
        <fullName evidence="1">Ribulose 1,5-bisphosphate synthase</fullName>
        <shortName evidence="1">RuBP synthase</shortName>
    </alternativeName>
</protein>
<reference key="1">
    <citation type="journal article" date="1998" name="DNA Res.">
        <title>Complete sequence and gene organization of the genome of a hyper-thermophilic archaebacterium, Pyrococcus horikoshii OT3.</title>
        <authorList>
            <person name="Kawarabayasi Y."/>
            <person name="Sawada M."/>
            <person name="Horikawa H."/>
            <person name="Haikawa Y."/>
            <person name="Hino Y."/>
            <person name="Yamamoto S."/>
            <person name="Sekine M."/>
            <person name="Baba S."/>
            <person name="Kosugi H."/>
            <person name="Hosoyama A."/>
            <person name="Nagai Y."/>
            <person name="Sakai M."/>
            <person name="Ogura K."/>
            <person name="Otsuka R."/>
            <person name="Nakazawa H."/>
            <person name="Takamiya M."/>
            <person name="Ohfuku Y."/>
            <person name="Funahashi T."/>
            <person name="Tanaka T."/>
            <person name="Kudoh Y."/>
            <person name="Yamazaki J."/>
            <person name="Kushida N."/>
            <person name="Oguchi A."/>
            <person name="Aoki K."/>
            <person name="Yoshizawa T."/>
            <person name="Nakamura Y."/>
            <person name="Robb F.T."/>
            <person name="Horikoshi K."/>
            <person name="Masuchi Y."/>
            <person name="Shizuya H."/>
            <person name="Kikuchi H."/>
        </authorList>
    </citation>
    <scope>NUCLEOTIDE SEQUENCE [LARGE SCALE GENOMIC DNA]</scope>
    <source>
        <strain>ATCC 700860 / DSM 12428 / JCM 9974 / NBRC 100139 / OT-3</strain>
    </source>
</reference>
<name>R15PI_PYRHO</name>
<proteinExistence type="evidence at protein level"/>